<reference key="1">
    <citation type="submission" date="2007-04" db="EMBL/GenBank/DDBJ databases">
        <title>Complete sequence of Roseiflexus sp. RS-1.</title>
        <authorList>
            <consortium name="US DOE Joint Genome Institute"/>
            <person name="Copeland A."/>
            <person name="Lucas S."/>
            <person name="Lapidus A."/>
            <person name="Barry K."/>
            <person name="Detter J.C."/>
            <person name="Glavina del Rio T."/>
            <person name="Hammon N."/>
            <person name="Israni S."/>
            <person name="Dalin E."/>
            <person name="Tice H."/>
            <person name="Pitluck S."/>
            <person name="Chertkov O."/>
            <person name="Brettin T."/>
            <person name="Bruce D."/>
            <person name="Han C."/>
            <person name="Schmutz J."/>
            <person name="Larimer F."/>
            <person name="Land M."/>
            <person name="Hauser L."/>
            <person name="Kyrpides N."/>
            <person name="Mikhailova N."/>
            <person name="Bryant D.A."/>
            <person name="Richardson P."/>
        </authorList>
    </citation>
    <scope>NUCLEOTIDE SEQUENCE [LARGE SCALE GENOMIC DNA]</scope>
    <source>
        <strain>RS-1</strain>
    </source>
</reference>
<accession>A5UQN5</accession>
<name>ATPA_ROSS1</name>
<organism>
    <name type="scientific">Roseiflexus sp. (strain RS-1)</name>
    <dbReference type="NCBI Taxonomy" id="357808"/>
    <lineage>
        <taxon>Bacteria</taxon>
        <taxon>Bacillati</taxon>
        <taxon>Chloroflexota</taxon>
        <taxon>Chloroflexia</taxon>
        <taxon>Chloroflexales</taxon>
        <taxon>Roseiflexineae</taxon>
        <taxon>Roseiflexaceae</taxon>
        <taxon>Roseiflexus</taxon>
    </lineage>
</organism>
<protein>
    <recommendedName>
        <fullName evidence="2">ATP synthase subunit alpha</fullName>
        <ecNumber evidence="2">7.1.2.2</ecNumber>
    </recommendedName>
    <alternativeName>
        <fullName evidence="2">ATP synthase F1 sector subunit alpha</fullName>
    </alternativeName>
    <alternativeName>
        <fullName evidence="2">F-ATPase subunit alpha</fullName>
    </alternativeName>
</protein>
<keyword id="KW-0066">ATP synthesis</keyword>
<keyword id="KW-0067">ATP-binding</keyword>
<keyword id="KW-1003">Cell membrane</keyword>
<keyword id="KW-0139">CF(1)</keyword>
<keyword id="KW-0375">Hydrogen ion transport</keyword>
<keyword id="KW-0406">Ion transport</keyword>
<keyword id="KW-0472">Membrane</keyword>
<keyword id="KW-0547">Nucleotide-binding</keyword>
<keyword id="KW-1278">Translocase</keyword>
<keyword id="KW-0813">Transport</keyword>
<gene>
    <name evidence="2" type="primary">atpA</name>
    <name type="ordered locus">RoseRS_0514</name>
</gene>
<evidence type="ECO:0000250" key="1"/>
<evidence type="ECO:0000255" key="2">
    <source>
        <dbReference type="HAMAP-Rule" id="MF_01346"/>
    </source>
</evidence>
<proteinExistence type="inferred from homology"/>
<feature type="chain" id="PRO_0000339056" description="ATP synthase subunit alpha">
    <location>
        <begin position="1"/>
        <end position="527"/>
    </location>
</feature>
<feature type="binding site" evidence="2">
    <location>
        <begin position="177"/>
        <end position="184"/>
    </location>
    <ligand>
        <name>ATP</name>
        <dbReference type="ChEBI" id="CHEBI:30616"/>
    </ligand>
</feature>
<feature type="site" description="Required for activity" evidence="2">
    <location>
        <position position="378"/>
    </location>
</feature>
<dbReference type="EC" id="7.1.2.2" evidence="2"/>
<dbReference type="EMBL" id="CP000686">
    <property type="protein sequence ID" value="ABQ88938.1"/>
    <property type="molecule type" value="Genomic_DNA"/>
</dbReference>
<dbReference type="RefSeq" id="WP_011955295.1">
    <property type="nucleotide sequence ID" value="NC_009523.1"/>
</dbReference>
<dbReference type="SMR" id="A5UQN5"/>
<dbReference type="STRING" id="357808.RoseRS_0514"/>
<dbReference type="KEGG" id="rrs:RoseRS_0514"/>
<dbReference type="eggNOG" id="COG0056">
    <property type="taxonomic scope" value="Bacteria"/>
</dbReference>
<dbReference type="HOGENOM" id="CLU_010091_2_1_0"/>
<dbReference type="OrthoDB" id="9803053at2"/>
<dbReference type="Proteomes" id="UP000006554">
    <property type="component" value="Chromosome"/>
</dbReference>
<dbReference type="GO" id="GO:0005886">
    <property type="term" value="C:plasma membrane"/>
    <property type="evidence" value="ECO:0007669"/>
    <property type="project" value="UniProtKB-SubCell"/>
</dbReference>
<dbReference type="GO" id="GO:0045259">
    <property type="term" value="C:proton-transporting ATP synthase complex"/>
    <property type="evidence" value="ECO:0007669"/>
    <property type="project" value="UniProtKB-KW"/>
</dbReference>
<dbReference type="GO" id="GO:0043531">
    <property type="term" value="F:ADP binding"/>
    <property type="evidence" value="ECO:0007669"/>
    <property type="project" value="TreeGrafter"/>
</dbReference>
<dbReference type="GO" id="GO:0005524">
    <property type="term" value="F:ATP binding"/>
    <property type="evidence" value="ECO:0007669"/>
    <property type="project" value="UniProtKB-UniRule"/>
</dbReference>
<dbReference type="GO" id="GO:0046933">
    <property type="term" value="F:proton-transporting ATP synthase activity, rotational mechanism"/>
    <property type="evidence" value="ECO:0007669"/>
    <property type="project" value="UniProtKB-UniRule"/>
</dbReference>
<dbReference type="CDD" id="cd18113">
    <property type="entry name" value="ATP-synt_F1_alpha_C"/>
    <property type="match status" value="1"/>
</dbReference>
<dbReference type="CDD" id="cd18116">
    <property type="entry name" value="ATP-synt_F1_alpha_N"/>
    <property type="match status" value="1"/>
</dbReference>
<dbReference type="CDD" id="cd01132">
    <property type="entry name" value="F1-ATPase_alpha_CD"/>
    <property type="match status" value="1"/>
</dbReference>
<dbReference type="FunFam" id="1.20.150.20:FF:000001">
    <property type="entry name" value="ATP synthase subunit alpha"/>
    <property type="match status" value="1"/>
</dbReference>
<dbReference type="FunFam" id="3.40.50.300:FF:000002">
    <property type="entry name" value="ATP synthase subunit alpha"/>
    <property type="match status" value="1"/>
</dbReference>
<dbReference type="Gene3D" id="2.40.30.20">
    <property type="match status" value="1"/>
</dbReference>
<dbReference type="Gene3D" id="1.20.150.20">
    <property type="entry name" value="ATP synthase alpha/beta chain, C-terminal domain"/>
    <property type="match status" value="1"/>
</dbReference>
<dbReference type="Gene3D" id="3.40.50.300">
    <property type="entry name" value="P-loop containing nucleotide triphosphate hydrolases"/>
    <property type="match status" value="1"/>
</dbReference>
<dbReference type="HAMAP" id="MF_01346">
    <property type="entry name" value="ATP_synth_alpha_bact"/>
    <property type="match status" value="1"/>
</dbReference>
<dbReference type="InterPro" id="IPR023366">
    <property type="entry name" value="ATP_synth_asu-like_sf"/>
</dbReference>
<dbReference type="InterPro" id="IPR000793">
    <property type="entry name" value="ATP_synth_asu_C"/>
</dbReference>
<dbReference type="InterPro" id="IPR038376">
    <property type="entry name" value="ATP_synth_asu_C_sf"/>
</dbReference>
<dbReference type="InterPro" id="IPR033732">
    <property type="entry name" value="ATP_synth_F1_a_nt-bd_dom"/>
</dbReference>
<dbReference type="InterPro" id="IPR005294">
    <property type="entry name" value="ATP_synth_F1_asu"/>
</dbReference>
<dbReference type="InterPro" id="IPR020003">
    <property type="entry name" value="ATPase_a/bsu_AS"/>
</dbReference>
<dbReference type="InterPro" id="IPR004100">
    <property type="entry name" value="ATPase_F1/V1/A1_a/bsu_N"/>
</dbReference>
<dbReference type="InterPro" id="IPR036121">
    <property type="entry name" value="ATPase_F1/V1/A1_a/bsu_N_sf"/>
</dbReference>
<dbReference type="InterPro" id="IPR000194">
    <property type="entry name" value="ATPase_F1/V1/A1_a/bsu_nucl-bd"/>
</dbReference>
<dbReference type="InterPro" id="IPR027417">
    <property type="entry name" value="P-loop_NTPase"/>
</dbReference>
<dbReference type="NCBIfam" id="TIGR00962">
    <property type="entry name" value="atpA"/>
    <property type="match status" value="1"/>
</dbReference>
<dbReference type="NCBIfam" id="NF009884">
    <property type="entry name" value="PRK13343.1"/>
    <property type="match status" value="1"/>
</dbReference>
<dbReference type="PANTHER" id="PTHR48082">
    <property type="entry name" value="ATP SYNTHASE SUBUNIT ALPHA, MITOCHONDRIAL"/>
    <property type="match status" value="1"/>
</dbReference>
<dbReference type="PANTHER" id="PTHR48082:SF2">
    <property type="entry name" value="ATP SYNTHASE SUBUNIT ALPHA, MITOCHONDRIAL"/>
    <property type="match status" value="1"/>
</dbReference>
<dbReference type="Pfam" id="PF00006">
    <property type="entry name" value="ATP-synt_ab"/>
    <property type="match status" value="1"/>
</dbReference>
<dbReference type="Pfam" id="PF00306">
    <property type="entry name" value="ATP-synt_ab_C"/>
    <property type="match status" value="1"/>
</dbReference>
<dbReference type="Pfam" id="PF02874">
    <property type="entry name" value="ATP-synt_ab_N"/>
    <property type="match status" value="1"/>
</dbReference>
<dbReference type="PIRSF" id="PIRSF039088">
    <property type="entry name" value="F_ATPase_subunit_alpha"/>
    <property type="match status" value="1"/>
</dbReference>
<dbReference type="SUPFAM" id="SSF47917">
    <property type="entry name" value="C-terminal domain of alpha and beta subunits of F1 ATP synthase"/>
    <property type="match status" value="1"/>
</dbReference>
<dbReference type="SUPFAM" id="SSF50615">
    <property type="entry name" value="N-terminal domain of alpha and beta subunits of F1 ATP synthase"/>
    <property type="match status" value="1"/>
</dbReference>
<dbReference type="SUPFAM" id="SSF52540">
    <property type="entry name" value="P-loop containing nucleoside triphosphate hydrolases"/>
    <property type="match status" value="1"/>
</dbReference>
<dbReference type="PROSITE" id="PS00152">
    <property type="entry name" value="ATPASE_ALPHA_BETA"/>
    <property type="match status" value="1"/>
</dbReference>
<comment type="function">
    <text evidence="2">Produces ATP from ADP in the presence of a proton gradient across the membrane. The alpha chain is a regulatory subunit.</text>
</comment>
<comment type="catalytic activity">
    <reaction evidence="2">
        <text>ATP + H2O + 4 H(+)(in) = ADP + phosphate + 5 H(+)(out)</text>
        <dbReference type="Rhea" id="RHEA:57720"/>
        <dbReference type="ChEBI" id="CHEBI:15377"/>
        <dbReference type="ChEBI" id="CHEBI:15378"/>
        <dbReference type="ChEBI" id="CHEBI:30616"/>
        <dbReference type="ChEBI" id="CHEBI:43474"/>
        <dbReference type="ChEBI" id="CHEBI:456216"/>
        <dbReference type="EC" id="7.1.2.2"/>
    </reaction>
</comment>
<comment type="subunit">
    <text evidence="1">F-type ATPases have 2 components, CF(1) - the catalytic core - and CF(0) - the membrane proton channel. CF(1) has five subunits: alpha(3), beta(3), gamma(1), delta(1), epsilon(1). CF(0) has four main subunits: a(1), b(1), b'(1) and c(9-12) (By similarity).</text>
</comment>
<comment type="subcellular location">
    <subcellularLocation>
        <location evidence="2">Cell membrane</location>
        <topology evidence="2">Peripheral membrane protein</topology>
    </subcellularLocation>
</comment>
<comment type="similarity">
    <text evidence="2">Belongs to the ATPase alpha/beta chains family.</text>
</comment>
<sequence length="527" mass="57560">MAVATTEELYQRLLRSIREGVDLQPKMVNVGTVIQVGDGVARISGLEQAMASELLEFPPKAGRSEPVYGIALNLEKDSVSAIILGDYLGIEEGDQVNSTGRVISVPVGQALIGRVVNALGQPIDGKGPIQTTTYRPIERIAPGVITRKSVDTPVQTGIIAIDSMIPIGRGQRELIIGDRQTGKTAVAIDTIINQKGQGMVCIYVAIGQKRAQVAQIINILEKYGALDYTIVVAATASESAALQYIAPYAGCAMGEEVMENGVMIDGREVRDALIVYDDLSKHATAYRQVSLLLRRPPGREAYPGDVFYLHSRLLERAARLNEDYGGGSLTALPIIETQANDVSAYIPTNVISITDGQIYLETDLFNAGIRPALNVGISVSRVGGAAQTRAMRSVSDRLKIDMAQFRDLAAFAQFASDLDATTRAQIERGQRLQEVLKQPQFQPMPLEEQVVILFAGINGYLDDVPINQIGRFKAELFTYMRTAHPEVGKMIYDNRLDRKFPSPEIRSAIENMLKEFKQMSDFSAEQA</sequence>